<organism>
    <name type="scientific">Pseudomonas paraeruginosa (strain DSM 24068 / PA7)</name>
    <name type="common">Pseudomonas aeruginosa (strain PA7)</name>
    <dbReference type="NCBI Taxonomy" id="381754"/>
    <lineage>
        <taxon>Bacteria</taxon>
        <taxon>Pseudomonadati</taxon>
        <taxon>Pseudomonadota</taxon>
        <taxon>Gammaproteobacteria</taxon>
        <taxon>Pseudomonadales</taxon>
        <taxon>Pseudomonadaceae</taxon>
        <taxon>Pseudomonas</taxon>
        <taxon>Pseudomonas paraeruginosa</taxon>
    </lineage>
</organism>
<feature type="chain" id="PRO_1000062710" description="UPF0386 protein PSPA7_4799">
    <location>
        <begin position="1"/>
        <end position="85"/>
    </location>
</feature>
<protein>
    <recommendedName>
        <fullName evidence="1">UPF0386 protein PSPA7_4799</fullName>
    </recommendedName>
</protein>
<sequence length="85" mass="9504">MNVSKPEQRTLHALAQGGHIAFFRDASGKVTQVECYNRDGHLLLDCTLAVFARLKSKRLIHSSQGRPYRISMAGLKAVRPQADNR</sequence>
<accession>A6VAQ5</accession>
<name>Y4799_PSEP7</name>
<reference key="1">
    <citation type="submission" date="2007-06" db="EMBL/GenBank/DDBJ databases">
        <authorList>
            <person name="Dodson R.J."/>
            <person name="Harkins D."/>
            <person name="Paulsen I.T."/>
        </authorList>
    </citation>
    <scope>NUCLEOTIDE SEQUENCE [LARGE SCALE GENOMIC DNA]</scope>
    <source>
        <strain>DSM 24068 / PA7</strain>
    </source>
</reference>
<comment type="similarity">
    <text evidence="1">Belongs to the UPF0386 family.</text>
</comment>
<evidence type="ECO:0000255" key="1">
    <source>
        <dbReference type="HAMAP-Rule" id="MF_00827"/>
    </source>
</evidence>
<gene>
    <name type="ordered locus">PSPA7_4799</name>
</gene>
<dbReference type="EMBL" id="CP000744">
    <property type="protein sequence ID" value="ABR82018.1"/>
    <property type="molecule type" value="Genomic_DNA"/>
</dbReference>
<dbReference type="RefSeq" id="WP_003148476.1">
    <property type="nucleotide sequence ID" value="NC_009656.1"/>
</dbReference>
<dbReference type="KEGG" id="pap:PSPA7_4799"/>
<dbReference type="HOGENOM" id="CLU_164736_0_0_6"/>
<dbReference type="Proteomes" id="UP000001582">
    <property type="component" value="Chromosome"/>
</dbReference>
<dbReference type="HAMAP" id="MF_00827">
    <property type="entry name" value="UPF0386"/>
    <property type="match status" value="1"/>
</dbReference>
<dbReference type="InterPro" id="IPR018654">
    <property type="entry name" value="YjhX_toxin"/>
</dbReference>
<dbReference type="NCBIfam" id="NF010240">
    <property type="entry name" value="PRK13687.1"/>
    <property type="match status" value="1"/>
</dbReference>
<dbReference type="Pfam" id="PF09857">
    <property type="entry name" value="YjhX_toxin"/>
    <property type="match status" value="1"/>
</dbReference>
<proteinExistence type="inferred from homology"/>